<reference key="1">
    <citation type="submission" date="2006-06" db="EMBL/GenBank/DDBJ databases">
        <title>Complete sequence of chromosome of Mycobacterium sp. MCS.</title>
        <authorList>
            <consortium name="US DOE Joint Genome Institute"/>
            <person name="Copeland A."/>
            <person name="Lucas S."/>
            <person name="Lapidus A."/>
            <person name="Barry K."/>
            <person name="Detter J.C."/>
            <person name="Glavina del Rio T."/>
            <person name="Hammon N."/>
            <person name="Israni S."/>
            <person name="Dalin E."/>
            <person name="Tice H."/>
            <person name="Pitluck S."/>
            <person name="Martinez M."/>
            <person name="Schmutz J."/>
            <person name="Larimer F."/>
            <person name="Land M."/>
            <person name="Hauser L."/>
            <person name="Kyrpides N."/>
            <person name="Kim E."/>
            <person name="Miller C.D."/>
            <person name="Hughes J.E."/>
            <person name="Anderson A.J."/>
            <person name="Sims R.C."/>
            <person name="Richardson P."/>
        </authorList>
    </citation>
    <scope>NUCLEOTIDE SEQUENCE [LARGE SCALE GENOMIC DNA]</scope>
    <source>
        <strain>MCS</strain>
    </source>
</reference>
<protein>
    <recommendedName>
        <fullName evidence="2">Probable cell division protein WhiA</fullName>
    </recommendedName>
</protein>
<evidence type="ECO:0000250" key="1">
    <source>
        <dbReference type="UniProtKB" id="P9WF45"/>
    </source>
</evidence>
<evidence type="ECO:0000255" key="2">
    <source>
        <dbReference type="HAMAP-Rule" id="MF_01420"/>
    </source>
</evidence>
<evidence type="ECO:0000256" key="3">
    <source>
        <dbReference type="SAM" id="MobiDB-lite"/>
    </source>
</evidence>
<feature type="chain" id="PRO_0000376533" description="Probable cell division protein WhiA">
    <location>
        <begin position="1"/>
        <end position="327"/>
    </location>
</feature>
<feature type="DNA-binding region" description="H-T-H motif" evidence="2">
    <location>
        <begin position="275"/>
        <end position="308"/>
    </location>
</feature>
<feature type="region of interest" description="Disordered" evidence="3">
    <location>
        <begin position="304"/>
        <end position="327"/>
    </location>
</feature>
<accession>Q1B9C8</accession>
<dbReference type="EMBL" id="CP000384">
    <property type="protein sequence ID" value="ABG08506.1"/>
    <property type="status" value="ALT_INIT"/>
    <property type="molecule type" value="Genomic_DNA"/>
</dbReference>
<dbReference type="SMR" id="Q1B9C8"/>
<dbReference type="KEGG" id="mmc:Mmcs_2398"/>
<dbReference type="HOGENOM" id="CLU_053282_0_0_11"/>
<dbReference type="BioCyc" id="MSP164756:G1G6O-2450-MONOMER"/>
<dbReference type="GO" id="GO:0003677">
    <property type="term" value="F:DNA binding"/>
    <property type="evidence" value="ECO:0007669"/>
    <property type="project" value="UniProtKB-UniRule"/>
</dbReference>
<dbReference type="GO" id="GO:0051301">
    <property type="term" value="P:cell division"/>
    <property type="evidence" value="ECO:0007669"/>
    <property type="project" value="UniProtKB-UniRule"/>
</dbReference>
<dbReference type="GO" id="GO:0043937">
    <property type="term" value="P:regulation of sporulation"/>
    <property type="evidence" value="ECO:0007669"/>
    <property type="project" value="InterPro"/>
</dbReference>
<dbReference type="FunFam" id="3.10.28.10:FF:000001">
    <property type="entry name" value="Probable cell division protein WhiA"/>
    <property type="match status" value="1"/>
</dbReference>
<dbReference type="Gene3D" id="3.10.28.10">
    <property type="entry name" value="Homing endonucleases"/>
    <property type="match status" value="1"/>
</dbReference>
<dbReference type="HAMAP" id="MF_01420">
    <property type="entry name" value="HTH_type_WhiA"/>
    <property type="match status" value="1"/>
</dbReference>
<dbReference type="InterPro" id="IPR027434">
    <property type="entry name" value="Homing_endonucl"/>
</dbReference>
<dbReference type="InterPro" id="IPR018478">
    <property type="entry name" value="Sporu_reg_WhiA_N_dom"/>
</dbReference>
<dbReference type="InterPro" id="IPR003802">
    <property type="entry name" value="Sporulation_regulator_WhiA"/>
</dbReference>
<dbReference type="InterPro" id="IPR023054">
    <property type="entry name" value="Sporulation_regulator_WhiA_C"/>
</dbReference>
<dbReference type="InterPro" id="IPR039518">
    <property type="entry name" value="WhiA_LAGLIDADG_dom"/>
</dbReference>
<dbReference type="NCBIfam" id="TIGR00647">
    <property type="entry name" value="DNA_bind_WhiA"/>
    <property type="match status" value="1"/>
</dbReference>
<dbReference type="PANTHER" id="PTHR37307">
    <property type="entry name" value="CELL DIVISION PROTEIN WHIA-RELATED"/>
    <property type="match status" value="1"/>
</dbReference>
<dbReference type="PANTHER" id="PTHR37307:SF1">
    <property type="entry name" value="CELL DIVISION PROTEIN WHIA-RELATED"/>
    <property type="match status" value="1"/>
</dbReference>
<dbReference type="Pfam" id="PF02650">
    <property type="entry name" value="HTH_WhiA"/>
    <property type="match status" value="1"/>
</dbReference>
<dbReference type="Pfam" id="PF14527">
    <property type="entry name" value="LAGLIDADG_WhiA"/>
    <property type="match status" value="1"/>
</dbReference>
<dbReference type="Pfam" id="PF10298">
    <property type="entry name" value="WhiA_N"/>
    <property type="match status" value="1"/>
</dbReference>
<sequence length="327" mass="35097">MAMTAEVKDELSRLVVNSVSARRAEVASLLRFAGGLHIVSGRVVVEAEVDLGIIARRLRKDIYDLYGYNAVVHMLSASGIRKGTRYVVRVAKDGEALARQTGLLDLRGRPVRGLPAQVVGGSVADAEAAWRGAFLAHGSLTEPGRSSALEVSCPGPEAALALVGAARRLGVSAKAREVRGSDRVVVRDGEAIGALLTRMGAQDTRLTWEERRMRREVRATANRLANFDDANLRRSARAAVAAAARVERALEILGDTVPDHLASAGKLRVEHRQASLEELGRLADPPMTKDAVAGRIRRLLSMADRKAKQDGIPDTESAVTPDLLEDA</sequence>
<name>WHIA_MYCSS</name>
<keyword id="KW-0131">Cell cycle</keyword>
<keyword id="KW-0132">Cell division</keyword>
<keyword id="KW-0238">DNA-binding</keyword>
<gene>
    <name evidence="2" type="primary">whiA</name>
    <name type="ordered locus">Mmcs_2398</name>
</gene>
<organism>
    <name type="scientific">Mycobacterium sp. (strain MCS)</name>
    <dbReference type="NCBI Taxonomy" id="164756"/>
    <lineage>
        <taxon>Bacteria</taxon>
        <taxon>Bacillati</taxon>
        <taxon>Actinomycetota</taxon>
        <taxon>Actinomycetes</taxon>
        <taxon>Mycobacteriales</taxon>
        <taxon>Mycobacteriaceae</taxon>
        <taxon>Mycobacterium</taxon>
    </lineage>
</organism>
<comment type="function">
    <text evidence="2">Involved in cell division and chromosome segregation.</text>
</comment>
<comment type="similarity">
    <text evidence="2">Belongs to the WhiA family.</text>
</comment>
<comment type="sequence caution" evidence="1">
    <conflict type="erroneous initiation">
        <sequence resource="EMBL-CDS" id="ABG08506"/>
    </conflict>
    <text>Truncated N-terminus.</text>
</comment>
<proteinExistence type="inferred from homology"/>